<evidence type="ECO:0000255" key="1">
    <source>
        <dbReference type="HAMAP-Rule" id="MF_00019"/>
    </source>
</evidence>
<proteinExistence type="inferred from homology"/>
<gene>
    <name evidence="1" type="primary">plsX</name>
    <name type="ordered locus">TC_0196</name>
</gene>
<comment type="function">
    <text evidence="1">Catalyzes the reversible formation of acyl-phosphate (acyl-PO(4)) from acyl-[acyl-carrier-protein] (acyl-ACP). This enzyme utilizes acyl-ACP as fatty acyl donor, but not acyl-CoA.</text>
</comment>
<comment type="catalytic activity">
    <reaction evidence="1">
        <text>a fatty acyl-[ACP] + phosphate = an acyl phosphate + holo-[ACP]</text>
        <dbReference type="Rhea" id="RHEA:42292"/>
        <dbReference type="Rhea" id="RHEA-COMP:9685"/>
        <dbReference type="Rhea" id="RHEA-COMP:14125"/>
        <dbReference type="ChEBI" id="CHEBI:43474"/>
        <dbReference type="ChEBI" id="CHEBI:59918"/>
        <dbReference type="ChEBI" id="CHEBI:64479"/>
        <dbReference type="ChEBI" id="CHEBI:138651"/>
        <dbReference type="EC" id="2.3.1.274"/>
    </reaction>
</comment>
<comment type="pathway">
    <text evidence="1">Lipid metabolism; phospholipid metabolism.</text>
</comment>
<comment type="subunit">
    <text evidence="1">Homodimer. Probably interacts with PlsY.</text>
</comment>
<comment type="subcellular location">
    <subcellularLocation>
        <location evidence="1">Cytoplasm</location>
    </subcellularLocation>
    <text evidence="1">Associated with the membrane possibly through PlsY.</text>
</comment>
<comment type="similarity">
    <text evidence="1">Belongs to the PlsX family.</text>
</comment>
<organism>
    <name type="scientific">Chlamydia muridarum (strain MoPn / Nigg)</name>
    <dbReference type="NCBI Taxonomy" id="243161"/>
    <lineage>
        <taxon>Bacteria</taxon>
        <taxon>Pseudomonadati</taxon>
        <taxon>Chlamydiota</taxon>
        <taxon>Chlamydiia</taxon>
        <taxon>Chlamydiales</taxon>
        <taxon>Chlamydiaceae</taxon>
        <taxon>Chlamydia/Chlamydophila group</taxon>
        <taxon>Chlamydia</taxon>
    </lineage>
</organism>
<dbReference type="EC" id="2.3.1.274" evidence="1"/>
<dbReference type="EMBL" id="AE002160">
    <property type="protein sequence ID" value="AAF73537.1"/>
    <property type="molecule type" value="Genomic_DNA"/>
</dbReference>
<dbReference type="RefSeq" id="WP_010229789.1">
    <property type="nucleotide sequence ID" value="NZ_CP063055.1"/>
</dbReference>
<dbReference type="SMR" id="Q9PLB1"/>
<dbReference type="GeneID" id="1246322"/>
<dbReference type="KEGG" id="cmu:TC_0196"/>
<dbReference type="eggNOG" id="COG0416">
    <property type="taxonomic scope" value="Bacteria"/>
</dbReference>
<dbReference type="HOGENOM" id="CLU_039379_1_0_0"/>
<dbReference type="OrthoDB" id="9806408at2"/>
<dbReference type="UniPathway" id="UPA00085"/>
<dbReference type="Proteomes" id="UP000000800">
    <property type="component" value="Chromosome"/>
</dbReference>
<dbReference type="GO" id="GO:0005737">
    <property type="term" value="C:cytoplasm"/>
    <property type="evidence" value="ECO:0007669"/>
    <property type="project" value="UniProtKB-SubCell"/>
</dbReference>
<dbReference type="GO" id="GO:0043811">
    <property type="term" value="F:phosphate:acyl-[acyl carrier protein] acyltransferase activity"/>
    <property type="evidence" value="ECO:0007669"/>
    <property type="project" value="UniProtKB-UniRule"/>
</dbReference>
<dbReference type="GO" id="GO:0006633">
    <property type="term" value="P:fatty acid biosynthetic process"/>
    <property type="evidence" value="ECO:0007669"/>
    <property type="project" value="UniProtKB-UniRule"/>
</dbReference>
<dbReference type="GO" id="GO:0008654">
    <property type="term" value="P:phospholipid biosynthetic process"/>
    <property type="evidence" value="ECO:0007669"/>
    <property type="project" value="UniProtKB-KW"/>
</dbReference>
<dbReference type="Gene3D" id="3.40.718.10">
    <property type="entry name" value="Isopropylmalate Dehydrogenase"/>
    <property type="match status" value="1"/>
</dbReference>
<dbReference type="HAMAP" id="MF_00019">
    <property type="entry name" value="PlsX"/>
    <property type="match status" value="1"/>
</dbReference>
<dbReference type="InterPro" id="IPR003664">
    <property type="entry name" value="FA_synthesis"/>
</dbReference>
<dbReference type="InterPro" id="IPR012281">
    <property type="entry name" value="Phospholipid_synth_PlsX-like"/>
</dbReference>
<dbReference type="NCBIfam" id="NF010420">
    <property type="entry name" value="PRK13846.1"/>
    <property type="match status" value="1"/>
</dbReference>
<dbReference type="PANTHER" id="PTHR30100">
    <property type="entry name" value="FATTY ACID/PHOSPHOLIPID SYNTHESIS PROTEIN PLSX"/>
    <property type="match status" value="1"/>
</dbReference>
<dbReference type="PANTHER" id="PTHR30100:SF1">
    <property type="entry name" value="PHOSPHATE ACYLTRANSFERASE"/>
    <property type="match status" value="1"/>
</dbReference>
<dbReference type="Pfam" id="PF02504">
    <property type="entry name" value="FA_synthesis"/>
    <property type="match status" value="1"/>
</dbReference>
<dbReference type="PIRSF" id="PIRSF002465">
    <property type="entry name" value="Phsphlp_syn_PlsX"/>
    <property type="match status" value="1"/>
</dbReference>
<dbReference type="SUPFAM" id="SSF53659">
    <property type="entry name" value="Isocitrate/Isopropylmalate dehydrogenase-like"/>
    <property type="match status" value="1"/>
</dbReference>
<feature type="chain" id="PRO_0000189863" description="Phosphate acyltransferase">
    <location>
        <begin position="1"/>
        <end position="319"/>
    </location>
</feature>
<protein>
    <recommendedName>
        <fullName evidence="1">Phosphate acyltransferase</fullName>
        <ecNumber evidence="1">2.3.1.274</ecNumber>
    </recommendedName>
    <alternativeName>
        <fullName evidence="1">Acyl-ACP phosphotransacylase</fullName>
    </alternativeName>
    <alternativeName>
        <fullName evidence="1">Acyl-[acyl-carrier-protein]--phosphate acyltransferase</fullName>
    </alternativeName>
    <alternativeName>
        <fullName evidence="1">Phosphate-acyl-ACP acyltransferase</fullName>
    </alternativeName>
</protein>
<sequence length="319" mass="34245">MKVRLGVDMMGGDHDPLVVWEALEEVLLSLDGQPVEFSVFATPDVHQQLTHSPLSRSVQMIASESFVSMEDSVLAAVRKKRSSMALGLDSLQRGELDGFISAGNTAALVTLARAKIPMIPAVPRPALLVSVPTLSGFAVILDVGATVAVNPEEMVGFARMGLAYRQSLSSSDQSFTLGLLNIGSEERKGTDSHKHTFRMLRDVFGSAFLGNVESGDVFSGKVDIVVTDGFTGNVFLKTAEGLFDFLRHILGDHLEKTIKTRFDYTIYPGSIISGLSRLVIKCHGKSRETALFGGISGAVDLARSNVCGRIAAKFGLEEA</sequence>
<keyword id="KW-0963">Cytoplasm</keyword>
<keyword id="KW-0444">Lipid biosynthesis</keyword>
<keyword id="KW-0443">Lipid metabolism</keyword>
<keyword id="KW-0594">Phospholipid biosynthesis</keyword>
<keyword id="KW-1208">Phospholipid metabolism</keyword>
<keyword id="KW-0808">Transferase</keyword>
<accession>Q9PLB1</accession>
<reference key="1">
    <citation type="journal article" date="2000" name="Nucleic Acids Res.">
        <title>Genome sequences of Chlamydia trachomatis MoPn and Chlamydia pneumoniae AR39.</title>
        <authorList>
            <person name="Read T.D."/>
            <person name="Brunham R.C."/>
            <person name="Shen C."/>
            <person name="Gill S.R."/>
            <person name="Heidelberg J.F."/>
            <person name="White O."/>
            <person name="Hickey E.K."/>
            <person name="Peterson J.D."/>
            <person name="Utterback T.R."/>
            <person name="Berry K.J."/>
            <person name="Bass S."/>
            <person name="Linher K.D."/>
            <person name="Weidman J.F."/>
            <person name="Khouri H.M."/>
            <person name="Craven B."/>
            <person name="Bowman C."/>
            <person name="Dodson R.J."/>
            <person name="Gwinn M.L."/>
            <person name="Nelson W.C."/>
            <person name="DeBoy R.T."/>
            <person name="Kolonay J.F."/>
            <person name="McClarty G."/>
            <person name="Salzberg S.L."/>
            <person name="Eisen J.A."/>
            <person name="Fraser C.M."/>
        </authorList>
    </citation>
    <scope>NUCLEOTIDE SEQUENCE [LARGE SCALE GENOMIC DNA]</scope>
    <source>
        <strain>MoPn / Nigg</strain>
    </source>
</reference>
<name>PLSX_CHLMU</name>